<proteinExistence type="evidence at protein level"/>
<sequence length="520" mass="57653">MAGPERWGPLLLCLLQAAPGRPRLAPPQNVTLLSQNFSVYLTWLPGLGNPQDVTYFVAYQSSPTRRRWREVEECAGTKELLCSMMCLKKQDLYNKFKGRVRTVSPSSKSPWVESEYLDYLFEVEPAPPVLVLTQTEEILSANATYQLPPCMPPLDLKYEVAFWKEGAGNKTLFPVTPHGQPVQITLQPAASEHHCLSARTIYTFSVPKYSKFSKPTCFLLEVPEANWAFLVLPSLLILLLVIAAGGVIWKTLMGNPWFQRAKMPRALDFSGHTHPVATFQPSRPESVNDLFLCPQKELTRGVRPTPRVRAPATQQTRWKKDLAEDEEEEDEEDTEDGVSFQPYIEPPSFLGQEHQAPGHSEAGGVDSGRPRAPLVPSEGSSAWDSSDRSWASTVDSSWDRAGSSGYLAEKGPGQGPGGDGHQESLPPPEFSKDSGFLEELPEDNLSSWATWGTLPPEPNLVPGGPPVSLQTLTFCWESSPEEEEEARESEIEDSDAGSWGAESTQRTEDRGRTLGHYMAR</sequence>
<keyword id="KW-0002">3D-structure</keyword>
<keyword id="KW-0025">Alternative splicing</keyword>
<keyword id="KW-0051">Antiviral defense</keyword>
<keyword id="KW-1015">Disulfide bond</keyword>
<keyword id="KW-0325">Glycoprotein</keyword>
<keyword id="KW-0472">Membrane</keyword>
<keyword id="KW-1267">Proteomics identification</keyword>
<keyword id="KW-0675">Receptor</keyword>
<keyword id="KW-1185">Reference proteome</keyword>
<keyword id="KW-0732">Signal</keyword>
<keyword id="KW-0812">Transmembrane</keyword>
<keyword id="KW-1133">Transmembrane helix</keyword>
<keyword id="KW-0832">Ubl conjugation</keyword>
<feature type="signal peptide" evidence="2">
    <location>
        <begin position="1"/>
        <end position="20"/>
    </location>
</feature>
<feature type="chain" id="PRO_0000011019" description="Interferon lambda receptor 1">
    <location>
        <begin position="21"/>
        <end position="520"/>
    </location>
</feature>
<feature type="topological domain" description="Extracellular" evidence="2">
    <location>
        <begin position="21"/>
        <end position="228"/>
    </location>
</feature>
<feature type="transmembrane region" description="Helical" evidence="2">
    <location>
        <begin position="229"/>
        <end position="249"/>
    </location>
</feature>
<feature type="topological domain" description="Cytoplasmic" evidence="2">
    <location>
        <begin position="250"/>
        <end position="520"/>
    </location>
</feature>
<feature type="domain" description="Fibronectin type-III" evidence="3">
    <location>
        <begin position="26"/>
        <end position="126"/>
    </location>
</feature>
<feature type="region of interest" description="Disordered" evidence="4">
    <location>
        <begin position="302"/>
        <end position="439"/>
    </location>
</feature>
<feature type="region of interest" description="Disordered" evidence="4">
    <location>
        <begin position="477"/>
        <end position="520"/>
    </location>
</feature>
<feature type="compositionally biased region" description="Acidic residues" evidence="4">
    <location>
        <begin position="323"/>
        <end position="336"/>
    </location>
</feature>
<feature type="compositionally biased region" description="Low complexity" evidence="4">
    <location>
        <begin position="380"/>
        <end position="392"/>
    </location>
</feature>
<feature type="compositionally biased region" description="Acidic residues" evidence="4">
    <location>
        <begin position="479"/>
        <end position="495"/>
    </location>
</feature>
<feature type="glycosylation site" description="N-linked (GlcNAc...) asparagine" evidence="8">
    <location>
        <position position="29"/>
    </location>
</feature>
<feature type="glycosylation site" description="N-linked (GlcNAc...) asparagine" evidence="8">
    <location>
        <position position="36"/>
    </location>
</feature>
<feature type="glycosylation site" description="N-linked (GlcNAc...) asparagine" evidence="8">
    <location>
        <position position="142"/>
    </location>
</feature>
<feature type="glycosylation site" description="N-linked (GlcNAc...) asparagine" evidence="2">
    <location>
        <position position="169"/>
    </location>
</feature>
<feature type="disulfide bond" evidence="8">
    <location>
        <begin position="74"/>
        <end position="82"/>
    </location>
</feature>
<feature type="disulfide bond" evidence="8">
    <location>
        <begin position="86"/>
        <end position="150"/>
    </location>
</feature>
<feature type="disulfide bond" evidence="8">
    <location>
        <begin position="195"/>
        <end position="217"/>
    </location>
</feature>
<feature type="splice variant" id="VSP_011888" description="In isoform 3." evidence="10">
    <original>TLFPVTPHGQPVQITLQPAASEHHCLSARTIYTFSVPKYSK</original>
    <variation>VGSSFPAPRLGPLLHPFLLRFFSPSQPAPAPLLQEVFPVHS</variation>
    <location>
        <begin position="171"/>
        <end position="211"/>
    </location>
</feature>
<feature type="splice variant" id="VSP_011889" description="In isoform 3." evidence="10">
    <location>
        <begin position="212"/>
        <end position="244"/>
    </location>
</feature>
<feature type="splice variant" id="VSP_011891" description="In isoform 4." evidence="11">
    <original>EANWAFLVLPSLLILLLVIAA</original>
    <variation>GLFWTHTPCGNLSAQQTRVRE</variation>
    <location>
        <begin position="224"/>
        <end position="244"/>
    </location>
</feature>
<feature type="splice variant" id="VSP_011892" description="In isoform 3 and isoform 4." evidence="10 11">
    <location>
        <begin position="245"/>
        <end position="520"/>
    </location>
</feature>
<feature type="splice variant" id="VSP_011890" description="In isoform 2." evidence="10">
    <location>
        <begin position="268"/>
        <end position="296"/>
    </location>
</feature>
<feature type="mutagenesis site" description="More resistant to viral-induced degradation; when associated with R-320." evidence="9">
    <original>K</original>
    <variation>R</variation>
    <location>
        <position position="319"/>
    </location>
</feature>
<feature type="mutagenesis site" description="More resistant to viral-induced degradation; when associated with R-319." evidence="9">
    <original>K</original>
    <variation>R</variation>
    <location>
        <position position="320"/>
    </location>
</feature>
<feature type="strand" evidence="14">
    <location>
        <begin position="28"/>
        <end position="35"/>
    </location>
</feature>
<feature type="strand" evidence="14">
    <location>
        <begin position="38"/>
        <end position="44"/>
    </location>
</feature>
<feature type="strand" evidence="14">
    <location>
        <begin position="54"/>
        <end position="60"/>
    </location>
</feature>
<feature type="helix" evidence="13">
    <location>
        <begin position="63"/>
        <end position="65"/>
    </location>
</feature>
<feature type="strand" evidence="14">
    <location>
        <begin position="68"/>
        <end position="70"/>
    </location>
</feature>
<feature type="helix" evidence="14">
    <location>
        <begin position="72"/>
        <end position="74"/>
    </location>
</feature>
<feature type="strand" evidence="17">
    <location>
        <begin position="75"/>
        <end position="77"/>
    </location>
</feature>
<feature type="strand" evidence="14">
    <location>
        <begin position="79"/>
        <end position="83"/>
    </location>
</feature>
<feature type="strand" evidence="14">
    <location>
        <begin position="98"/>
        <end position="104"/>
    </location>
</feature>
<feature type="helix" evidence="14">
    <location>
        <begin position="119"/>
        <end position="122"/>
    </location>
</feature>
<feature type="strand" evidence="14">
    <location>
        <begin position="129"/>
        <end position="135"/>
    </location>
</feature>
<feature type="strand" evidence="14">
    <location>
        <begin position="138"/>
        <end position="144"/>
    </location>
</feature>
<feature type="strand" evidence="14">
    <location>
        <begin position="156"/>
        <end position="164"/>
    </location>
</feature>
<feature type="strand" evidence="13">
    <location>
        <begin position="170"/>
        <end position="172"/>
    </location>
</feature>
<feature type="strand" evidence="14">
    <location>
        <begin position="180"/>
        <end position="185"/>
    </location>
</feature>
<feature type="strand" evidence="14">
    <location>
        <begin position="192"/>
        <end position="209"/>
    </location>
</feature>
<feature type="strand" evidence="14">
    <location>
        <begin position="216"/>
        <end position="219"/>
    </location>
</feature>
<feature type="helix" evidence="15">
    <location>
        <begin position="256"/>
        <end position="258"/>
    </location>
</feature>
<feature type="helix" evidence="16">
    <location>
        <begin position="265"/>
        <end position="267"/>
    </location>
</feature>
<feature type="strand" evidence="16">
    <location>
        <begin position="277"/>
        <end position="279"/>
    </location>
</feature>
<feature type="strand" evidence="16">
    <location>
        <begin position="291"/>
        <end position="294"/>
    </location>
</feature>
<comment type="function">
    <text evidence="5 6 7">The IFNLR1/IL10RB dimer is a receptor for the cytokine ligands IFNL2 and IFNL3 and mediates their antiviral activity. The ligand/receptor complex stimulate the activation of the JAK/STAT signaling pathway leading to the expression of IFN-stimulated genes (ISG), which contribute to the antiviral state. Determines the cell type specificity of the lambda interferon action. Shows a more restricted pattern of expression in the epithelial tissues thereby limiting responses to lambda interferons primarily to epithelial cells of the respiratory, gastrointestinal, and reproductive tracts. Seems not to be essential for early virus-activated host defense in vaginal infection, but plays an important role in Toll-like receptor (TLR)-induced antiviral defense. Plays a significant role in the antiviral immune defense in the intestinal epithelium.</text>
</comment>
<comment type="subunit">
    <text evidence="5 6 8">Heterodimer with IL10RB.</text>
</comment>
<comment type="interaction">
    <interactant intactId="EBI-373215">
        <id>Q8IU57</id>
    </interactant>
    <interactant intactId="EBI-12109402">
        <id>Q86W74-2</id>
        <label>ANKRD46</label>
    </interactant>
    <organismsDiffer>false</organismsDiffer>
    <experiments>3</experiments>
</comment>
<comment type="interaction">
    <interactant intactId="EBI-373215">
        <id>Q8IU57</id>
    </interactant>
    <interactant intactId="EBI-12244618">
        <id>Q6PL45-2</id>
        <label>BRICD5</label>
    </interactant>
    <organismsDiffer>false</organismsDiffer>
    <experiments>3</experiments>
</comment>
<comment type="interaction">
    <interactant intactId="EBI-373215">
        <id>Q8IU57</id>
    </interactant>
    <interactant intactId="EBI-12019274">
        <id>Q4LDR2</id>
        <label>CTXN3</label>
    </interactant>
    <organismsDiffer>false</organismsDiffer>
    <experiments>3</experiments>
</comment>
<comment type="interaction">
    <interactant intactId="EBI-373215">
        <id>Q8IU57</id>
    </interactant>
    <interactant intactId="EBI-465167">
        <id>P09466</id>
        <label>PAEP</label>
    </interactant>
    <organismsDiffer>false</organismsDiffer>
    <experiments>3</experiments>
</comment>
<comment type="subcellular location">
    <subcellularLocation>
        <location evidence="1">Membrane</location>
        <topology evidence="1">Single-pass type I membrane protein</topology>
    </subcellularLocation>
</comment>
<comment type="alternative products">
    <event type="alternative splicing"/>
    <isoform>
        <id>Q8IU57-1</id>
        <name>1</name>
        <name>IL-28R-alpha-v1</name>
        <sequence type="displayed"/>
    </isoform>
    <isoform>
        <id>Q8IU57-2</id>
        <name>2</name>
        <name>IL-28R-alpha-v2</name>
        <sequence type="described" ref="VSP_011890"/>
    </isoform>
    <isoform>
        <id>Q8IU57-3</id>
        <name>3</name>
        <name>IL-28R-alpha-v3</name>
        <sequence type="described" ref="VSP_011888 VSP_011889 VSP_011892"/>
    </isoform>
    <isoform>
        <id>Q8IU57-4</id>
        <name>4</name>
        <name>Secreted</name>
        <sequence type="described" ref="VSP_011891 VSP_011892"/>
    </isoform>
</comment>
<comment type="tissue specificity">
    <text evidence="5 6">Widely expressed.</text>
</comment>
<comment type="PTM">
    <text evidence="9">Ubiquitinated by FBXO45-containing E3 ligase leading to proteasomal degradation.</text>
</comment>
<comment type="similarity">
    <text evidence="12">Belongs to the type II cytokine receptor family.</text>
</comment>
<comment type="sequence caution" evidence="12">
    <conflict type="erroneous initiation">
        <sequence resource="EMBL-CDS" id="BAD18707"/>
    </conflict>
    <text>Extended N-terminus.</text>
</comment>
<reference key="1">
    <citation type="journal article" date="2003" name="Biochem. J.">
        <title>Cloning of a new type II cytokine receptor activating signal transducer and activator of transcription (STAT)1, STAT2 and STAT3.</title>
        <authorList>
            <person name="Dumoutier L."/>
            <person name="Lejeune D."/>
            <person name="Hor S."/>
            <person name="Fickenscher H."/>
            <person name="Renauld J.-C."/>
        </authorList>
    </citation>
    <scope>NUCLEOTIDE SEQUENCE [MRNA] (ISOFORMS 1 AND 4)</scope>
    <scope>FUNCTION</scope>
</reference>
<reference key="2">
    <citation type="journal article" date="2003" name="Nat. Immunol.">
        <title>IL-28, IL-29 and their class II cytokine receptor IL-28R.</title>
        <authorList>
            <person name="Sheppard P."/>
            <person name="Kindsvogel W."/>
            <person name="Xu W."/>
            <person name="Henderson K."/>
            <person name="Schlutsmeyer S."/>
            <person name="Whitmore T.E."/>
            <person name="Kuestner R."/>
            <person name="Garrigues U."/>
            <person name="Birks C."/>
            <person name="Roraback J."/>
            <person name="Ostrander C."/>
            <person name="Dong D."/>
            <person name="Shin J."/>
            <person name="Presnell S."/>
            <person name="Fox B."/>
            <person name="Haldeman B."/>
            <person name="Cooper E."/>
            <person name="Taft D."/>
            <person name="Gilbert T."/>
            <person name="Grant F.J."/>
            <person name="Tackett M."/>
            <person name="Krivan W."/>
            <person name="McKnight G."/>
            <person name="Clegg C."/>
            <person name="Foster D."/>
            <person name="Klucher K.M."/>
        </authorList>
    </citation>
    <scope>NUCLEOTIDE SEQUENCE [MRNA] (ISOFORMS 1; 2 AND 3)</scope>
    <scope>FUNCTION</scope>
    <scope>TISSUE SPECIFICITY</scope>
    <scope>SUBUNIT</scope>
</reference>
<reference key="3">
    <citation type="journal article" date="2003" name="Nat. Immunol.">
        <title>IFN-lambdas mediate antiviral protection through a distinct class II cytokine receptor complex.</title>
        <authorList>
            <person name="Kotenko S.V."/>
            <person name="Gallagher G."/>
            <person name="Baurin V.V."/>
            <person name="Lewis-Antes A."/>
            <person name="Shen M."/>
            <person name="Shah N.K."/>
            <person name="Langer J.A."/>
            <person name="Sheikh F."/>
            <person name="Dickensheets H."/>
            <person name="Donnelly R.P."/>
        </authorList>
    </citation>
    <scope>NUCLEOTIDE SEQUENCE [MRNA] (ISOFORM 1)</scope>
    <scope>FUNCTION</scope>
    <scope>TISSUE SPECIFICITY</scope>
    <scope>SUBUNIT</scope>
</reference>
<reference key="4">
    <citation type="journal article" date="2004" name="Nat. Genet.">
        <title>Complete sequencing and characterization of 21,243 full-length human cDNAs.</title>
        <authorList>
            <person name="Ota T."/>
            <person name="Suzuki Y."/>
            <person name="Nishikawa T."/>
            <person name="Otsuki T."/>
            <person name="Sugiyama T."/>
            <person name="Irie R."/>
            <person name="Wakamatsu A."/>
            <person name="Hayashi K."/>
            <person name="Sato H."/>
            <person name="Nagai K."/>
            <person name="Kimura K."/>
            <person name="Makita H."/>
            <person name="Sekine M."/>
            <person name="Obayashi M."/>
            <person name="Nishi T."/>
            <person name="Shibahara T."/>
            <person name="Tanaka T."/>
            <person name="Ishii S."/>
            <person name="Yamamoto J."/>
            <person name="Saito K."/>
            <person name="Kawai Y."/>
            <person name="Isono Y."/>
            <person name="Nakamura Y."/>
            <person name="Nagahari K."/>
            <person name="Murakami K."/>
            <person name="Yasuda T."/>
            <person name="Iwayanagi T."/>
            <person name="Wagatsuma M."/>
            <person name="Shiratori A."/>
            <person name="Sudo H."/>
            <person name="Hosoiri T."/>
            <person name="Kaku Y."/>
            <person name="Kodaira H."/>
            <person name="Kondo H."/>
            <person name="Sugawara M."/>
            <person name="Takahashi M."/>
            <person name="Kanda K."/>
            <person name="Yokoi T."/>
            <person name="Furuya T."/>
            <person name="Kikkawa E."/>
            <person name="Omura Y."/>
            <person name="Abe K."/>
            <person name="Kamihara K."/>
            <person name="Katsuta N."/>
            <person name="Sato K."/>
            <person name="Tanikawa M."/>
            <person name="Yamazaki M."/>
            <person name="Ninomiya K."/>
            <person name="Ishibashi T."/>
            <person name="Yamashita H."/>
            <person name="Murakawa K."/>
            <person name="Fujimori K."/>
            <person name="Tanai H."/>
            <person name="Kimata M."/>
            <person name="Watanabe M."/>
            <person name="Hiraoka S."/>
            <person name="Chiba Y."/>
            <person name="Ishida S."/>
            <person name="Ono Y."/>
            <person name="Takiguchi S."/>
            <person name="Watanabe S."/>
            <person name="Yosida M."/>
            <person name="Hotuta T."/>
            <person name="Kusano J."/>
            <person name="Kanehori K."/>
            <person name="Takahashi-Fujii A."/>
            <person name="Hara H."/>
            <person name="Tanase T.-O."/>
            <person name="Nomura Y."/>
            <person name="Togiya S."/>
            <person name="Komai F."/>
            <person name="Hara R."/>
            <person name="Takeuchi K."/>
            <person name="Arita M."/>
            <person name="Imose N."/>
            <person name="Musashino K."/>
            <person name="Yuuki H."/>
            <person name="Oshima A."/>
            <person name="Sasaki N."/>
            <person name="Aotsuka S."/>
            <person name="Yoshikawa Y."/>
            <person name="Matsunawa H."/>
            <person name="Ichihara T."/>
            <person name="Shiohata N."/>
            <person name="Sano S."/>
            <person name="Moriya S."/>
            <person name="Momiyama H."/>
            <person name="Satoh N."/>
            <person name="Takami S."/>
            <person name="Terashima Y."/>
            <person name="Suzuki O."/>
            <person name="Nakagawa S."/>
            <person name="Senoh A."/>
            <person name="Mizoguchi H."/>
            <person name="Goto Y."/>
            <person name="Shimizu F."/>
            <person name="Wakebe H."/>
            <person name="Hishigaki H."/>
            <person name="Watanabe T."/>
            <person name="Sugiyama A."/>
            <person name="Takemoto M."/>
            <person name="Kawakami B."/>
            <person name="Yamazaki M."/>
            <person name="Watanabe K."/>
            <person name="Kumagai A."/>
            <person name="Itakura S."/>
            <person name="Fukuzumi Y."/>
            <person name="Fujimori Y."/>
            <person name="Komiyama M."/>
            <person name="Tashiro H."/>
            <person name="Tanigami A."/>
            <person name="Fujiwara T."/>
            <person name="Ono T."/>
            <person name="Yamada K."/>
            <person name="Fujii Y."/>
            <person name="Ozaki K."/>
            <person name="Hirao M."/>
            <person name="Ohmori Y."/>
            <person name="Kawabata A."/>
            <person name="Hikiji T."/>
            <person name="Kobatake N."/>
            <person name="Inagaki H."/>
            <person name="Ikema Y."/>
            <person name="Okamoto S."/>
            <person name="Okitani R."/>
            <person name="Kawakami T."/>
            <person name="Noguchi S."/>
            <person name="Itoh T."/>
            <person name="Shigeta K."/>
            <person name="Senba T."/>
            <person name="Matsumura K."/>
            <person name="Nakajima Y."/>
            <person name="Mizuno T."/>
            <person name="Morinaga M."/>
            <person name="Sasaki M."/>
            <person name="Togashi T."/>
            <person name="Oyama M."/>
            <person name="Hata H."/>
            <person name="Watanabe M."/>
            <person name="Komatsu T."/>
            <person name="Mizushima-Sugano J."/>
            <person name="Satoh T."/>
            <person name="Shirai Y."/>
            <person name="Takahashi Y."/>
            <person name="Nakagawa K."/>
            <person name="Okumura K."/>
            <person name="Nagase T."/>
            <person name="Nomura N."/>
            <person name="Kikuchi H."/>
            <person name="Masuho Y."/>
            <person name="Yamashita R."/>
            <person name="Nakai K."/>
            <person name="Yada T."/>
            <person name="Nakamura Y."/>
            <person name="Ohara O."/>
            <person name="Isogai T."/>
            <person name="Sugano S."/>
        </authorList>
    </citation>
    <scope>NUCLEOTIDE SEQUENCE [LARGE SCALE MRNA] (ISOFORM 1)</scope>
    <source>
        <tissue>Spleen</tissue>
    </source>
</reference>
<reference key="5">
    <citation type="journal article" date="2006" name="Nature">
        <title>The DNA sequence and biological annotation of human chromosome 1.</title>
        <authorList>
            <person name="Gregory S.G."/>
            <person name="Barlow K.F."/>
            <person name="McLay K.E."/>
            <person name="Kaul R."/>
            <person name="Swarbreck D."/>
            <person name="Dunham A."/>
            <person name="Scott C.E."/>
            <person name="Howe K.L."/>
            <person name="Woodfine K."/>
            <person name="Spencer C.C.A."/>
            <person name="Jones M.C."/>
            <person name="Gillson C."/>
            <person name="Searle S."/>
            <person name="Zhou Y."/>
            <person name="Kokocinski F."/>
            <person name="McDonald L."/>
            <person name="Evans R."/>
            <person name="Phillips K."/>
            <person name="Atkinson A."/>
            <person name="Cooper R."/>
            <person name="Jones C."/>
            <person name="Hall R.E."/>
            <person name="Andrews T.D."/>
            <person name="Lloyd C."/>
            <person name="Ainscough R."/>
            <person name="Almeida J.P."/>
            <person name="Ambrose K.D."/>
            <person name="Anderson F."/>
            <person name="Andrew R.W."/>
            <person name="Ashwell R.I.S."/>
            <person name="Aubin K."/>
            <person name="Babbage A.K."/>
            <person name="Bagguley C.L."/>
            <person name="Bailey J."/>
            <person name="Beasley H."/>
            <person name="Bethel G."/>
            <person name="Bird C.P."/>
            <person name="Bray-Allen S."/>
            <person name="Brown J.Y."/>
            <person name="Brown A.J."/>
            <person name="Buckley D."/>
            <person name="Burton J."/>
            <person name="Bye J."/>
            <person name="Carder C."/>
            <person name="Chapman J.C."/>
            <person name="Clark S.Y."/>
            <person name="Clarke G."/>
            <person name="Clee C."/>
            <person name="Cobley V."/>
            <person name="Collier R.E."/>
            <person name="Corby N."/>
            <person name="Coville G.J."/>
            <person name="Davies J."/>
            <person name="Deadman R."/>
            <person name="Dunn M."/>
            <person name="Earthrowl M."/>
            <person name="Ellington A.G."/>
            <person name="Errington H."/>
            <person name="Frankish A."/>
            <person name="Frankland J."/>
            <person name="French L."/>
            <person name="Garner P."/>
            <person name="Garnett J."/>
            <person name="Gay L."/>
            <person name="Ghori M.R.J."/>
            <person name="Gibson R."/>
            <person name="Gilby L.M."/>
            <person name="Gillett W."/>
            <person name="Glithero R.J."/>
            <person name="Grafham D.V."/>
            <person name="Griffiths C."/>
            <person name="Griffiths-Jones S."/>
            <person name="Grocock R."/>
            <person name="Hammond S."/>
            <person name="Harrison E.S.I."/>
            <person name="Hart E."/>
            <person name="Haugen E."/>
            <person name="Heath P.D."/>
            <person name="Holmes S."/>
            <person name="Holt K."/>
            <person name="Howden P.J."/>
            <person name="Hunt A.R."/>
            <person name="Hunt S.E."/>
            <person name="Hunter G."/>
            <person name="Isherwood J."/>
            <person name="James R."/>
            <person name="Johnson C."/>
            <person name="Johnson D."/>
            <person name="Joy A."/>
            <person name="Kay M."/>
            <person name="Kershaw J.K."/>
            <person name="Kibukawa M."/>
            <person name="Kimberley A.M."/>
            <person name="King A."/>
            <person name="Knights A.J."/>
            <person name="Lad H."/>
            <person name="Laird G."/>
            <person name="Lawlor S."/>
            <person name="Leongamornlert D.A."/>
            <person name="Lloyd D.M."/>
            <person name="Loveland J."/>
            <person name="Lovell J."/>
            <person name="Lush M.J."/>
            <person name="Lyne R."/>
            <person name="Martin S."/>
            <person name="Mashreghi-Mohammadi M."/>
            <person name="Matthews L."/>
            <person name="Matthews N.S.W."/>
            <person name="McLaren S."/>
            <person name="Milne S."/>
            <person name="Mistry S."/>
            <person name="Moore M.J.F."/>
            <person name="Nickerson T."/>
            <person name="O'Dell C.N."/>
            <person name="Oliver K."/>
            <person name="Palmeiri A."/>
            <person name="Palmer S.A."/>
            <person name="Parker A."/>
            <person name="Patel D."/>
            <person name="Pearce A.V."/>
            <person name="Peck A.I."/>
            <person name="Pelan S."/>
            <person name="Phelps K."/>
            <person name="Phillimore B.J."/>
            <person name="Plumb R."/>
            <person name="Rajan J."/>
            <person name="Raymond C."/>
            <person name="Rouse G."/>
            <person name="Saenphimmachak C."/>
            <person name="Sehra H.K."/>
            <person name="Sheridan E."/>
            <person name="Shownkeen R."/>
            <person name="Sims S."/>
            <person name="Skuce C.D."/>
            <person name="Smith M."/>
            <person name="Steward C."/>
            <person name="Subramanian S."/>
            <person name="Sycamore N."/>
            <person name="Tracey A."/>
            <person name="Tromans A."/>
            <person name="Van Helmond Z."/>
            <person name="Wall M."/>
            <person name="Wallis J.M."/>
            <person name="White S."/>
            <person name="Whitehead S.L."/>
            <person name="Wilkinson J.E."/>
            <person name="Willey D.L."/>
            <person name="Williams H."/>
            <person name="Wilming L."/>
            <person name="Wray P.W."/>
            <person name="Wu Z."/>
            <person name="Coulson A."/>
            <person name="Vaudin M."/>
            <person name="Sulston J.E."/>
            <person name="Durbin R.M."/>
            <person name="Hubbard T."/>
            <person name="Wooster R."/>
            <person name="Dunham I."/>
            <person name="Carter N.P."/>
            <person name="McVean G."/>
            <person name="Ross M.T."/>
            <person name="Harrow J."/>
            <person name="Olson M.V."/>
            <person name="Beck S."/>
            <person name="Rogers J."/>
            <person name="Bentley D.R."/>
        </authorList>
    </citation>
    <scope>NUCLEOTIDE SEQUENCE [LARGE SCALE GENOMIC DNA]</scope>
</reference>
<reference key="6">
    <citation type="submission" date="2005-07" db="EMBL/GenBank/DDBJ databases">
        <authorList>
            <person name="Mural R.J."/>
            <person name="Istrail S."/>
            <person name="Sutton G.G."/>
            <person name="Florea L."/>
            <person name="Halpern A.L."/>
            <person name="Mobarry C.M."/>
            <person name="Lippert R."/>
            <person name="Walenz B."/>
            <person name="Shatkay H."/>
            <person name="Dew I."/>
            <person name="Miller J.R."/>
            <person name="Flanigan M.J."/>
            <person name="Edwards N.J."/>
            <person name="Bolanos R."/>
            <person name="Fasulo D."/>
            <person name="Halldorsson B.V."/>
            <person name="Hannenhalli S."/>
            <person name="Turner R."/>
            <person name="Yooseph S."/>
            <person name="Lu F."/>
            <person name="Nusskern D.R."/>
            <person name="Shue B.C."/>
            <person name="Zheng X.H."/>
            <person name="Zhong F."/>
            <person name="Delcher A.L."/>
            <person name="Huson D.H."/>
            <person name="Kravitz S.A."/>
            <person name="Mouchard L."/>
            <person name="Reinert K."/>
            <person name="Remington K.A."/>
            <person name="Clark A.G."/>
            <person name="Waterman M.S."/>
            <person name="Eichler E.E."/>
            <person name="Adams M.D."/>
            <person name="Hunkapiller M.W."/>
            <person name="Myers E.W."/>
            <person name="Venter J.C."/>
        </authorList>
    </citation>
    <scope>NUCLEOTIDE SEQUENCE [LARGE SCALE GENOMIC DNA]</scope>
</reference>
<reference key="7">
    <citation type="journal article" date="2004" name="Genome Res.">
        <title>The status, quality, and expansion of the NIH full-length cDNA project: the Mammalian Gene Collection (MGC).</title>
        <authorList>
            <consortium name="The MGC Project Team"/>
        </authorList>
    </citation>
    <scope>NUCLEOTIDE SEQUENCE [LARGE SCALE MRNA]</scope>
</reference>
<reference key="8">
    <citation type="journal article" date="2022" name="J. Biol. Chem.">
        <title>The E3 ligase subunit FBXO45 binds the interferon-lambda receptor and promotes its degradation during influenza virus infection.</title>
        <authorList>
            <person name="Tsai M."/>
            <person name="Osman W."/>
            <person name="Adair J."/>
            <person name="ElMergawy R."/>
            <person name="Chafin L."/>
            <person name="Johns F."/>
            <person name="Farkas D."/>
            <person name="Elhance A."/>
            <person name="Londino J."/>
            <person name="Mallampalli R.K."/>
        </authorList>
    </citation>
    <scope>MUTAGENESIS OF LYS-319 AND LYS-320</scope>
    <scope>UBIQUITINATION</scope>
</reference>
<reference key="9">
    <citation type="journal article" date="2010" name="J. Mol. Biol.">
        <title>Crystal structure of human interferon-lambda1 in complex with its high-affinity receptor interferon-lambdaR1.</title>
        <authorList>
            <person name="Miknis Z.J."/>
            <person name="Magracheva E."/>
            <person name="Li W."/>
            <person name="Zdanov A."/>
            <person name="Kotenko S.V."/>
            <person name="Wlodawer A."/>
        </authorList>
    </citation>
    <scope>X-RAY CRYSTALLOGRAPHY (2.10 ANGSTROMS) OF 19-226 IN COMPLEX WITH IFNL1</scope>
    <scope>GLYCOSYLATION AT ASN-29; ASN-36 AND ASN-142</scope>
    <scope>DISULFIDE BONDS</scope>
</reference>
<name>INLR1_HUMAN</name>
<evidence type="ECO:0000250" key="1"/>
<evidence type="ECO:0000255" key="2"/>
<evidence type="ECO:0000255" key="3">
    <source>
        <dbReference type="PROSITE-ProRule" id="PRU00316"/>
    </source>
</evidence>
<evidence type="ECO:0000256" key="4">
    <source>
        <dbReference type="SAM" id="MobiDB-lite"/>
    </source>
</evidence>
<evidence type="ECO:0000269" key="5">
    <source>
    </source>
</evidence>
<evidence type="ECO:0000269" key="6">
    <source>
    </source>
</evidence>
<evidence type="ECO:0000269" key="7">
    <source>
    </source>
</evidence>
<evidence type="ECO:0000269" key="8">
    <source>
    </source>
</evidence>
<evidence type="ECO:0000269" key="9">
    <source>
    </source>
</evidence>
<evidence type="ECO:0000303" key="10">
    <source>
    </source>
</evidence>
<evidence type="ECO:0000303" key="11">
    <source>
    </source>
</evidence>
<evidence type="ECO:0000305" key="12"/>
<evidence type="ECO:0007829" key="13">
    <source>
        <dbReference type="PDB" id="3OG4"/>
    </source>
</evidence>
<evidence type="ECO:0007829" key="14">
    <source>
        <dbReference type="PDB" id="3OG6"/>
    </source>
</evidence>
<evidence type="ECO:0007829" key="15">
    <source>
        <dbReference type="PDB" id="5IXI"/>
    </source>
</evidence>
<evidence type="ECO:0007829" key="16">
    <source>
        <dbReference type="PDB" id="5L04"/>
    </source>
</evidence>
<evidence type="ECO:0007829" key="17">
    <source>
        <dbReference type="PDB" id="5T5W"/>
    </source>
</evidence>
<dbReference type="EMBL" id="AJ534330">
    <property type="protein sequence ID" value="CAD58829.1"/>
    <property type="molecule type" value="mRNA"/>
</dbReference>
<dbReference type="EMBL" id="AJ534331">
    <property type="protein sequence ID" value="CAD58830.1"/>
    <property type="molecule type" value="mRNA"/>
</dbReference>
<dbReference type="EMBL" id="AY129151">
    <property type="protein sequence ID" value="AAN28266.1"/>
    <property type="molecule type" value="mRNA"/>
</dbReference>
<dbReference type="EMBL" id="AY129152">
    <property type="protein sequence ID" value="AAN28267.1"/>
    <property type="molecule type" value="mRNA"/>
</dbReference>
<dbReference type="EMBL" id="AY129153">
    <property type="protein sequence ID" value="AAN28268.1"/>
    <property type="molecule type" value="mRNA"/>
</dbReference>
<dbReference type="EMBL" id="AF439325">
    <property type="protein sequence ID" value="AAN63632.1"/>
    <property type="molecule type" value="mRNA"/>
</dbReference>
<dbReference type="EMBL" id="AK160364">
    <property type="protein sequence ID" value="BAD18707.1"/>
    <property type="status" value="ALT_INIT"/>
    <property type="molecule type" value="mRNA"/>
</dbReference>
<dbReference type="EMBL" id="AL590683">
    <property type="status" value="NOT_ANNOTATED_CDS"/>
    <property type="molecule type" value="Genomic_DNA"/>
</dbReference>
<dbReference type="EMBL" id="CH471134">
    <property type="protein sequence ID" value="EAW95114.1"/>
    <property type="molecule type" value="Genomic_DNA"/>
</dbReference>
<dbReference type="EMBL" id="CH471134">
    <property type="protein sequence ID" value="EAW95115.1"/>
    <property type="molecule type" value="Genomic_DNA"/>
</dbReference>
<dbReference type="EMBL" id="CH471134">
    <property type="protein sequence ID" value="EAW95117.1"/>
    <property type="molecule type" value="Genomic_DNA"/>
</dbReference>
<dbReference type="EMBL" id="CH471134">
    <property type="protein sequence ID" value="EAW95118.1"/>
    <property type="molecule type" value="Genomic_DNA"/>
</dbReference>
<dbReference type="EMBL" id="BC140872">
    <property type="protein sequence ID" value="AAI40873.1"/>
    <property type="molecule type" value="mRNA"/>
</dbReference>
<dbReference type="CCDS" id="CCDS248.1">
    <molecule id="Q8IU57-1"/>
</dbReference>
<dbReference type="CCDS" id="CCDS249.1">
    <molecule id="Q8IU57-2"/>
</dbReference>
<dbReference type="CCDS" id="CCDS250.1">
    <molecule id="Q8IU57-4"/>
</dbReference>
<dbReference type="RefSeq" id="NP_734464.1">
    <molecule id="Q8IU57-1"/>
    <property type="nucleotide sequence ID" value="NM_170743.4"/>
</dbReference>
<dbReference type="RefSeq" id="NP_775087.1">
    <molecule id="Q8IU57-2"/>
    <property type="nucleotide sequence ID" value="NM_173064.3"/>
</dbReference>
<dbReference type="RefSeq" id="NP_775088.1">
    <molecule id="Q8IU57-4"/>
    <property type="nucleotide sequence ID" value="NM_173065.3"/>
</dbReference>
<dbReference type="PDB" id="3OG4">
    <property type="method" value="X-ray"/>
    <property type="resolution" value="2.16 A"/>
    <property type="chains" value="B=19-226"/>
</dbReference>
<dbReference type="PDB" id="3OG6">
    <property type="method" value="X-ray"/>
    <property type="resolution" value="2.10 A"/>
    <property type="chains" value="B=19-226"/>
</dbReference>
<dbReference type="PDB" id="5IXD">
    <property type="method" value="X-ray"/>
    <property type="resolution" value="2.85 A"/>
    <property type="chains" value="B=250-299"/>
</dbReference>
<dbReference type="PDB" id="5IXI">
    <property type="method" value="X-ray"/>
    <property type="resolution" value="2.57 A"/>
    <property type="chains" value="B=250-259"/>
</dbReference>
<dbReference type="PDB" id="5L04">
    <property type="method" value="X-ray"/>
    <property type="resolution" value="2.10 A"/>
    <property type="chains" value="B=260-307"/>
</dbReference>
<dbReference type="PDB" id="5T5W">
    <property type="method" value="X-ray"/>
    <property type="resolution" value="2.85 A"/>
    <property type="chains" value="B=21-226"/>
</dbReference>
<dbReference type="PDB" id="9BPU">
    <property type="method" value="EM"/>
    <property type="resolution" value="3.26 A"/>
    <property type="chains" value="B=21-226"/>
</dbReference>
<dbReference type="PDB" id="9BPV">
    <property type="method" value="EM"/>
    <property type="resolution" value="3.00 A"/>
    <property type="chains" value="B=21-226"/>
</dbReference>
<dbReference type="PDBsum" id="3OG4"/>
<dbReference type="PDBsum" id="3OG6"/>
<dbReference type="PDBsum" id="5IXD"/>
<dbReference type="PDBsum" id="5IXI"/>
<dbReference type="PDBsum" id="5L04"/>
<dbReference type="PDBsum" id="5T5W"/>
<dbReference type="PDBsum" id="9BPU"/>
<dbReference type="PDBsum" id="9BPV"/>
<dbReference type="EMDB" id="EMD-44790"/>
<dbReference type="EMDB" id="EMD-44791"/>
<dbReference type="SMR" id="Q8IU57"/>
<dbReference type="BioGRID" id="127873">
    <property type="interactions" value="49"/>
</dbReference>
<dbReference type="ComplexPortal" id="CPX-6011">
    <property type="entry name" value="Interferon lambda receptor-ligand complex, IFNL1 variant"/>
</dbReference>
<dbReference type="ComplexPortal" id="CPX-6012">
    <property type="entry name" value="Interferon lambda receptor-ligand complex, IFNL2 variant"/>
</dbReference>
<dbReference type="ComplexPortal" id="CPX-6013">
    <property type="entry name" value="Interferon lambda receptor-ligand complex, IFNL3 variant"/>
</dbReference>
<dbReference type="ComplexPortal" id="CPX-6014">
    <property type="entry name" value="Interferon lambda receptor-ligand complex, IFNL4 variant"/>
</dbReference>
<dbReference type="CORUM" id="Q8IU57"/>
<dbReference type="DIP" id="DIP-31197N"/>
<dbReference type="FunCoup" id="Q8IU57">
    <property type="interactions" value="602"/>
</dbReference>
<dbReference type="IntAct" id="Q8IU57">
    <property type="interactions" value="33"/>
</dbReference>
<dbReference type="STRING" id="9606.ENSP00000327824"/>
<dbReference type="ChEMBL" id="CHEMBL3831284"/>
<dbReference type="GlyCosmos" id="Q8IU57">
    <property type="glycosylation" value="4 sites, No reported glycans"/>
</dbReference>
<dbReference type="GlyGen" id="Q8IU57">
    <property type="glycosylation" value="5 sites"/>
</dbReference>
<dbReference type="iPTMnet" id="Q8IU57"/>
<dbReference type="PhosphoSitePlus" id="Q8IU57"/>
<dbReference type="BioMuta" id="IFNLR1"/>
<dbReference type="DMDM" id="55976528"/>
<dbReference type="MassIVE" id="Q8IU57"/>
<dbReference type="PaxDb" id="9606-ENSP00000327824"/>
<dbReference type="PeptideAtlas" id="Q8IU57"/>
<dbReference type="ABCD" id="Q8IU57">
    <property type="antibodies" value="4 sequenced antibodies"/>
</dbReference>
<dbReference type="Antibodypedia" id="2700">
    <property type="antibodies" value="268 antibodies from 30 providers"/>
</dbReference>
<dbReference type="DNASU" id="163702"/>
<dbReference type="Ensembl" id="ENST00000327535.6">
    <molecule id="Q8IU57-1"/>
    <property type="protein sequence ID" value="ENSP00000327824.1"/>
    <property type="gene ID" value="ENSG00000185436.12"/>
</dbReference>
<dbReference type="Ensembl" id="ENST00000327575.6">
    <molecule id="Q8IU57-4"/>
    <property type="protein sequence ID" value="ENSP00000328994.2"/>
    <property type="gene ID" value="ENSG00000185436.12"/>
</dbReference>
<dbReference type="Ensembl" id="ENST00000374418.3">
    <molecule id="Q8IU57-3"/>
    <property type="protein sequence ID" value="ENSP00000363539.3"/>
    <property type="gene ID" value="ENSG00000185436.12"/>
</dbReference>
<dbReference type="Ensembl" id="ENST00000374421.7">
    <molecule id="Q8IU57-2"/>
    <property type="protein sequence ID" value="ENSP00000363542.3"/>
    <property type="gene ID" value="ENSG00000185436.12"/>
</dbReference>
<dbReference type="GeneID" id="163702"/>
<dbReference type="KEGG" id="hsa:163702"/>
<dbReference type="MANE-Select" id="ENST00000327535.6">
    <property type="protein sequence ID" value="ENSP00000327824.1"/>
    <property type="RefSeq nucleotide sequence ID" value="NM_170743.4"/>
    <property type="RefSeq protein sequence ID" value="NP_734464.1"/>
</dbReference>
<dbReference type="UCSC" id="uc001bir.4">
    <molecule id="Q8IU57-1"/>
    <property type="organism name" value="human"/>
</dbReference>
<dbReference type="AGR" id="HGNC:18584"/>
<dbReference type="CTD" id="163702"/>
<dbReference type="DisGeNET" id="163702"/>
<dbReference type="GeneCards" id="IFNLR1"/>
<dbReference type="HGNC" id="HGNC:18584">
    <property type="gene designation" value="IFNLR1"/>
</dbReference>
<dbReference type="HPA" id="ENSG00000185436">
    <property type="expression patterns" value="Low tissue specificity"/>
</dbReference>
<dbReference type="MIM" id="607404">
    <property type="type" value="gene"/>
</dbReference>
<dbReference type="neXtProt" id="NX_Q8IU57"/>
<dbReference type="OpenTargets" id="ENSG00000185436"/>
<dbReference type="PharmGKB" id="PA134984880"/>
<dbReference type="VEuPathDB" id="HostDB:ENSG00000185436"/>
<dbReference type="eggNOG" id="ENOG502S4B0">
    <property type="taxonomic scope" value="Eukaryota"/>
</dbReference>
<dbReference type="GeneTree" id="ENSGT00510000048978"/>
<dbReference type="HOGENOM" id="CLU_043104_1_0_1"/>
<dbReference type="InParanoid" id="Q8IU57"/>
<dbReference type="OMA" id="FLCPQKE"/>
<dbReference type="OrthoDB" id="10031784at2759"/>
<dbReference type="PAN-GO" id="Q8IU57">
    <property type="GO annotations" value="3 GO annotations based on evolutionary models"/>
</dbReference>
<dbReference type="PhylomeDB" id="Q8IU57"/>
<dbReference type="TreeFam" id="TF336003"/>
<dbReference type="PathwayCommons" id="Q8IU57"/>
<dbReference type="Reactome" id="R-HSA-449836">
    <property type="pathway name" value="Other interleukin signaling"/>
</dbReference>
<dbReference type="Reactome" id="R-HSA-8854691">
    <property type="pathway name" value="Interleukin-20 family signaling"/>
</dbReference>
<dbReference type="SignaLink" id="Q8IU57"/>
<dbReference type="SIGNOR" id="Q8IU57"/>
<dbReference type="BioGRID-ORCS" id="163702">
    <property type="hits" value="79 hits in 1162 CRISPR screens"/>
</dbReference>
<dbReference type="ChiTaRS" id="IFNLR1">
    <property type="organism name" value="human"/>
</dbReference>
<dbReference type="EvolutionaryTrace" id="Q8IU57"/>
<dbReference type="GeneWiki" id="Interleukin_28_receptor,_alpha_subunit"/>
<dbReference type="GenomeRNAi" id="163702"/>
<dbReference type="Pharos" id="Q8IU57">
    <property type="development level" value="Tbio"/>
</dbReference>
<dbReference type="PRO" id="PR:Q8IU57"/>
<dbReference type="Proteomes" id="UP000005640">
    <property type="component" value="Chromosome 1"/>
</dbReference>
<dbReference type="RNAct" id="Q8IU57">
    <property type="molecule type" value="protein"/>
</dbReference>
<dbReference type="Bgee" id="ENSG00000185436">
    <property type="expression patterns" value="Expressed in ileal mucosa and 142 other cell types or tissues"/>
</dbReference>
<dbReference type="ExpressionAtlas" id="Q8IU57">
    <property type="expression patterns" value="baseline and differential"/>
</dbReference>
<dbReference type="GO" id="GO:0032002">
    <property type="term" value="C:interleukin-28 receptor complex"/>
    <property type="evidence" value="ECO:0000314"/>
    <property type="project" value="UniProtKB"/>
</dbReference>
<dbReference type="GO" id="GO:0016020">
    <property type="term" value="C:membrane"/>
    <property type="evidence" value="ECO:0000303"/>
    <property type="project" value="UniProtKB"/>
</dbReference>
<dbReference type="GO" id="GO:0005886">
    <property type="term" value="C:plasma membrane"/>
    <property type="evidence" value="ECO:0000318"/>
    <property type="project" value="GO_Central"/>
</dbReference>
<dbReference type="GO" id="GO:0004896">
    <property type="term" value="F:cytokine receptor activity"/>
    <property type="evidence" value="ECO:0000318"/>
    <property type="project" value="GO_Central"/>
</dbReference>
<dbReference type="GO" id="GO:0098586">
    <property type="term" value="P:cellular response to virus"/>
    <property type="evidence" value="ECO:0000303"/>
    <property type="project" value="ComplexPortal"/>
</dbReference>
<dbReference type="GO" id="GO:0019221">
    <property type="term" value="P:cytokine-mediated signaling pathway"/>
    <property type="evidence" value="ECO:0000318"/>
    <property type="project" value="GO_Central"/>
</dbReference>
<dbReference type="GO" id="GO:0051607">
    <property type="term" value="P:defense response to virus"/>
    <property type="evidence" value="ECO:0000250"/>
    <property type="project" value="UniProtKB"/>
</dbReference>
<dbReference type="GO" id="GO:0002385">
    <property type="term" value="P:mucosal immune response"/>
    <property type="evidence" value="ECO:0000250"/>
    <property type="project" value="UniProtKB"/>
</dbReference>
<dbReference type="GO" id="GO:0008285">
    <property type="term" value="P:negative regulation of cell population proliferation"/>
    <property type="evidence" value="ECO:0000303"/>
    <property type="project" value="UniProtKB"/>
</dbReference>
<dbReference type="GO" id="GO:1901857">
    <property type="term" value="P:positive regulation of cellular respiration"/>
    <property type="evidence" value="ECO:0000315"/>
    <property type="project" value="ARUK-UCL"/>
</dbReference>
<dbReference type="GO" id="GO:0050691">
    <property type="term" value="P:regulation of defense response to virus by host"/>
    <property type="evidence" value="ECO:0000314"/>
    <property type="project" value="UniProtKB"/>
</dbReference>
<dbReference type="GO" id="GO:0034342">
    <property type="term" value="P:response to type III interferon"/>
    <property type="evidence" value="ECO:0000250"/>
    <property type="project" value="UniProtKB"/>
</dbReference>
<dbReference type="GO" id="GO:0038196">
    <property type="term" value="P:type III interferon-mediated signaling pathway"/>
    <property type="evidence" value="ECO:0000303"/>
    <property type="project" value="ComplexPortal"/>
</dbReference>
<dbReference type="CDD" id="cd21910">
    <property type="entry name" value="JAK1bd_box_IFNLR1"/>
    <property type="match status" value="1"/>
</dbReference>
<dbReference type="DisProt" id="DP02446"/>
<dbReference type="FunFam" id="2.60.40.10:FF:001235">
    <property type="entry name" value="Interferon lambda receptor 1"/>
    <property type="match status" value="1"/>
</dbReference>
<dbReference type="FunFam" id="2.60.40.10:FF:001357">
    <property type="entry name" value="Interferon lambda receptor 1"/>
    <property type="match status" value="1"/>
</dbReference>
<dbReference type="Gene3D" id="2.60.40.10">
    <property type="entry name" value="Immunoglobulins"/>
    <property type="match status" value="2"/>
</dbReference>
<dbReference type="InterPro" id="IPR003961">
    <property type="entry name" value="FN3_dom"/>
</dbReference>
<dbReference type="InterPro" id="IPR036116">
    <property type="entry name" value="FN3_sf"/>
</dbReference>
<dbReference type="InterPro" id="IPR013783">
    <property type="entry name" value="Ig-like_fold"/>
</dbReference>
<dbReference type="InterPro" id="IPR050650">
    <property type="entry name" value="Type-II_Cytokine-TF_Rcpt"/>
</dbReference>
<dbReference type="PANTHER" id="PTHR20859:SF55">
    <property type="entry name" value="INTERFERON LAMBDA RECEPTOR 1"/>
    <property type="match status" value="1"/>
</dbReference>
<dbReference type="PANTHER" id="PTHR20859">
    <property type="entry name" value="INTERFERON/INTERLEUKIN RECEPTOR"/>
    <property type="match status" value="1"/>
</dbReference>
<dbReference type="Pfam" id="PF01108">
    <property type="entry name" value="Tissue_fac"/>
    <property type="match status" value="1"/>
</dbReference>
<dbReference type="SUPFAM" id="SSF49265">
    <property type="entry name" value="Fibronectin type III"/>
    <property type="match status" value="2"/>
</dbReference>
<dbReference type="PROSITE" id="PS50853">
    <property type="entry name" value="FN3"/>
    <property type="match status" value="1"/>
</dbReference>
<protein>
    <recommendedName>
        <fullName>Interferon lambda receptor 1</fullName>
        <shortName>IFN-lambda receptor 1</shortName>
        <shortName>IFN-lambda-R1</shortName>
    </recommendedName>
    <alternativeName>
        <fullName>Cytokine receptor class-II member 12</fullName>
    </alternativeName>
    <alternativeName>
        <fullName>Cytokine receptor family 2 member 12</fullName>
        <shortName>CRF2-12</shortName>
    </alternativeName>
    <alternativeName>
        <fullName>Interleukin-28 receptor subunit alpha</fullName>
        <shortName>IL-28 receptor subunit alpha</shortName>
        <shortName>IL-28R-alpha</shortName>
        <shortName>IL-28RA</shortName>
    </alternativeName>
    <alternativeName>
        <fullName>Likely interleukin or cytokine receptor 2</fullName>
        <shortName>LICR2</shortName>
    </alternativeName>
</protein>
<organism>
    <name type="scientific">Homo sapiens</name>
    <name type="common">Human</name>
    <dbReference type="NCBI Taxonomy" id="9606"/>
    <lineage>
        <taxon>Eukaryota</taxon>
        <taxon>Metazoa</taxon>
        <taxon>Chordata</taxon>
        <taxon>Craniata</taxon>
        <taxon>Vertebrata</taxon>
        <taxon>Euteleostomi</taxon>
        <taxon>Mammalia</taxon>
        <taxon>Eutheria</taxon>
        <taxon>Euarchontoglires</taxon>
        <taxon>Primates</taxon>
        <taxon>Haplorrhini</taxon>
        <taxon>Catarrhini</taxon>
        <taxon>Hominidae</taxon>
        <taxon>Homo</taxon>
    </lineage>
</organism>
<gene>
    <name type="primary">IFNLR1</name>
    <name type="synonym">IL28RA</name>
    <name type="synonym">LICR2</name>
</gene>
<accession>Q8IU57</accession>
<accession>Q5VTX5</accession>
<accession>Q5VTX7</accession>
<accession>Q5VTX8</accession>
<accession>Q6ZML8</accession>
<accession>Q8IV66</accession>
<accession>Q8IZI7</accession>
<accession>Q8IZI8</accession>